<feature type="chain" id="PRO_0000270136" description="Putative hemin import ATP-binding protein HrtA">
    <location>
        <begin position="1"/>
        <end position="221"/>
    </location>
</feature>
<feature type="domain" description="ABC transporter" evidence="2">
    <location>
        <begin position="3"/>
        <end position="221"/>
    </location>
</feature>
<feature type="binding site" evidence="2">
    <location>
        <begin position="39"/>
        <end position="46"/>
    </location>
    <ligand>
        <name>ATP</name>
        <dbReference type="ChEBI" id="CHEBI:30616"/>
    </ligand>
</feature>
<dbReference type="EC" id="7.6.2.-"/>
<dbReference type="EMBL" id="CP000255">
    <property type="protein sequence ID" value="ABD21476.1"/>
    <property type="molecule type" value="Genomic_DNA"/>
</dbReference>
<dbReference type="RefSeq" id="WP_001229911.1">
    <property type="nucleotide sequence ID" value="NZ_CP027476.1"/>
</dbReference>
<dbReference type="SMR" id="Q2FED7"/>
<dbReference type="KEGG" id="saa:SAUSA300_2306"/>
<dbReference type="HOGENOM" id="CLU_000604_1_22_9"/>
<dbReference type="OMA" id="FNRFAHD"/>
<dbReference type="Proteomes" id="UP000001939">
    <property type="component" value="Chromosome"/>
</dbReference>
<dbReference type="GO" id="GO:0005886">
    <property type="term" value="C:plasma membrane"/>
    <property type="evidence" value="ECO:0007669"/>
    <property type="project" value="UniProtKB-SubCell"/>
</dbReference>
<dbReference type="GO" id="GO:0005524">
    <property type="term" value="F:ATP binding"/>
    <property type="evidence" value="ECO:0007669"/>
    <property type="project" value="UniProtKB-KW"/>
</dbReference>
<dbReference type="GO" id="GO:0016887">
    <property type="term" value="F:ATP hydrolysis activity"/>
    <property type="evidence" value="ECO:0007669"/>
    <property type="project" value="InterPro"/>
</dbReference>
<dbReference type="GO" id="GO:0022857">
    <property type="term" value="F:transmembrane transporter activity"/>
    <property type="evidence" value="ECO:0007669"/>
    <property type="project" value="TreeGrafter"/>
</dbReference>
<dbReference type="CDD" id="cd03255">
    <property type="entry name" value="ABC_MJ0796_LolCDE_FtsE"/>
    <property type="match status" value="1"/>
</dbReference>
<dbReference type="FunFam" id="3.40.50.300:FF:000032">
    <property type="entry name" value="Export ABC transporter ATP-binding protein"/>
    <property type="match status" value="1"/>
</dbReference>
<dbReference type="Gene3D" id="3.40.50.300">
    <property type="entry name" value="P-loop containing nucleotide triphosphate hydrolases"/>
    <property type="match status" value="1"/>
</dbReference>
<dbReference type="InterPro" id="IPR003593">
    <property type="entry name" value="AAA+_ATPase"/>
</dbReference>
<dbReference type="InterPro" id="IPR003439">
    <property type="entry name" value="ABC_transporter-like_ATP-bd"/>
</dbReference>
<dbReference type="InterPro" id="IPR015854">
    <property type="entry name" value="ABC_transpr_LolD-like"/>
</dbReference>
<dbReference type="InterPro" id="IPR017911">
    <property type="entry name" value="MacB-like_ATP-bd"/>
</dbReference>
<dbReference type="InterPro" id="IPR027417">
    <property type="entry name" value="P-loop_NTPase"/>
</dbReference>
<dbReference type="PANTHER" id="PTHR24220:SF666">
    <property type="entry name" value="HEMIN IMPORT ATP-BINDING PROTEIN HRTA-RELATED"/>
    <property type="match status" value="1"/>
</dbReference>
<dbReference type="PANTHER" id="PTHR24220">
    <property type="entry name" value="IMPORT ATP-BINDING PROTEIN"/>
    <property type="match status" value="1"/>
</dbReference>
<dbReference type="Pfam" id="PF00005">
    <property type="entry name" value="ABC_tran"/>
    <property type="match status" value="1"/>
</dbReference>
<dbReference type="SMART" id="SM00382">
    <property type="entry name" value="AAA"/>
    <property type="match status" value="1"/>
</dbReference>
<dbReference type="SUPFAM" id="SSF52540">
    <property type="entry name" value="P-loop containing nucleoside triphosphate hydrolases"/>
    <property type="match status" value="1"/>
</dbReference>
<dbReference type="PROSITE" id="PS50893">
    <property type="entry name" value="ABC_TRANSPORTER_2"/>
    <property type="match status" value="1"/>
</dbReference>
<proteinExistence type="inferred from homology"/>
<name>HRTA_STAA3</name>
<sequence length="221" mass="24626">MALVVEDIVKNFGEGLSETKVLKGINFEVEQGEFVILNGASGSGKTTLLTILGGLLSQTSGTVLYNDAPLFDKQHRPSDLRLEDIGFIFQSSHLVPYLKVIEQLTLVGQEAGMTKQQSSTRAIQLLKNIGLEDRLNVYPHQLSGGEKQRVAIMRAFMNNPKIILADEPTASLDADRATKVVEMIRQQIKEQQMIGIMITHDRRLFEYADRVIELEDGKITD</sequence>
<keyword id="KW-0067">ATP-binding</keyword>
<keyword id="KW-1003">Cell membrane</keyword>
<keyword id="KW-0472">Membrane</keyword>
<keyword id="KW-0547">Nucleotide-binding</keyword>
<keyword id="KW-1278">Translocase</keyword>
<keyword id="KW-0813">Transport</keyword>
<protein>
    <recommendedName>
        <fullName>Putative hemin import ATP-binding protein HrtA</fullName>
        <ecNumber>7.6.2.-</ecNumber>
    </recommendedName>
</protein>
<organism>
    <name type="scientific">Staphylococcus aureus (strain USA300)</name>
    <dbReference type="NCBI Taxonomy" id="367830"/>
    <lineage>
        <taxon>Bacteria</taxon>
        <taxon>Bacillati</taxon>
        <taxon>Bacillota</taxon>
        <taxon>Bacilli</taxon>
        <taxon>Bacillales</taxon>
        <taxon>Staphylococcaceae</taxon>
        <taxon>Staphylococcus</taxon>
    </lineage>
</organism>
<reference key="1">
    <citation type="journal article" date="2006" name="Lancet">
        <title>Complete genome sequence of USA300, an epidemic clone of community-acquired meticillin-resistant Staphylococcus aureus.</title>
        <authorList>
            <person name="Diep B.A."/>
            <person name="Gill S.R."/>
            <person name="Chang R.F."/>
            <person name="Phan T.H."/>
            <person name="Chen J.H."/>
            <person name="Davidson M.G."/>
            <person name="Lin F."/>
            <person name="Lin J."/>
            <person name="Carleton H.A."/>
            <person name="Mongodin E.F."/>
            <person name="Sensabaugh G.F."/>
            <person name="Perdreau-Remington F."/>
        </authorList>
    </citation>
    <scope>NUCLEOTIDE SEQUENCE [LARGE SCALE GENOMIC DNA]</scope>
    <source>
        <strain>USA300</strain>
    </source>
</reference>
<gene>
    <name type="primary">hrtA</name>
    <name type="ordered locus">SAUSA300_2306</name>
</gene>
<accession>Q2FED7</accession>
<evidence type="ECO:0000250" key="1"/>
<evidence type="ECO:0000255" key="2">
    <source>
        <dbReference type="PROSITE-ProRule" id="PRU00434"/>
    </source>
</evidence>
<evidence type="ECO:0000305" key="3"/>
<comment type="function">
    <text evidence="1">Part of the ABC transporter complex hrt involved in hemin import. Responsible for energy coupling to the transport system (By similarity).</text>
</comment>
<comment type="subunit">
    <text evidence="1">The complex is composed of two ATP-binding proteins (HrtA), two transmembrane proteins (HrtB) and a solute-binding protein.</text>
</comment>
<comment type="subcellular location">
    <subcellularLocation>
        <location evidence="3">Cell membrane</location>
        <topology evidence="3">Peripheral membrane protein</topology>
    </subcellularLocation>
</comment>
<comment type="similarity">
    <text evidence="3">Belongs to the ABC transporter superfamily. HrtA family.</text>
</comment>